<keyword id="KW-0963">Cytoplasm</keyword>
<keyword id="KW-0324">Glycolysis</keyword>
<keyword id="KW-0456">Lyase</keyword>
<keyword id="KW-0704">Schiff base</keyword>
<gene>
    <name type="primary">fbaB</name>
    <name type="ordered locus">TC_0487</name>
</gene>
<protein>
    <recommendedName>
        <fullName>Probable fructose-bisphosphate aldolase class 1</fullName>
        <ecNumber>4.1.2.13</ecNumber>
    </recommendedName>
    <alternativeName>
        <fullName>Probable fructose-bisphosphate aldolase class I</fullName>
        <shortName>FBP aldolase</shortName>
    </alternativeName>
</protein>
<name>ALF1_CHLMU</name>
<sequence length="349" mass="38226">MTTILDLLGKDADYLLNHQCIIKKEALTLPSGDFVSRVFAESDRNNRVLRSLQQMFDHGRLGGSGYLSILPVDQGVEHTAGASFAKNPMYFDPENIVRLAIESGCSAVASSYGVLSILARRYAHKIPFLLKLNHNELLSYPTTYHQIFFSQVEDAYNMGAVAVGATVYFGSESSNEEIVSVAKAFSRARELGLATVLWCYLRNPHFTRNGVDYHTAADLTGQADHLGATLGADIVKQKLPTLQEGFKTINFSKTDDLVYSELSSNHPIDLCRYQVLNSYCGKVGLINSGGPSSGQNDFTEAAKTAVINKRAGGMGLILGRKAFQRPFSEGVQLLNLIQDIYLDPTISIS</sequence>
<accession>Q9PKH8</accession>
<evidence type="ECO:0000250" key="1"/>
<evidence type="ECO:0000305" key="2"/>
<proteinExistence type="inferred from homology"/>
<reference key="1">
    <citation type="journal article" date="2000" name="Nucleic Acids Res.">
        <title>Genome sequences of Chlamydia trachomatis MoPn and Chlamydia pneumoniae AR39.</title>
        <authorList>
            <person name="Read T.D."/>
            <person name="Brunham R.C."/>
            <person name="Shen C."/>
            <person name="Gill S.R."/>
            <person name="Heidelberg J.F."/>
            <person name="White O."/>
            <person name="Hickey E.K."/>
            <person name="Peterson J.D."/>
            <person name="Utterback T.R."/>
            <person name="Berry K.J."/>
            <person name="Bass S."/>
            <person name="Linher K.D."/>
            <person name="Weidman J.F."/>
            <person name="Khouri H.M."/>
            <person name="Craven B."/>
            <person name="Bowman C."/>
            <person name="Dodson R.J."/>
            <person name="Gwinn M.L."/>
            <person name="Nelson W.C."/>
            <person name="DeBoy R.T."/>
            <person name="Kolonay J.F."/>
            <person name="McClarty G."/>
            <person name="Salzberg S.L."/>
            <person name="Eisen J.A."/>
            <person name="Fraser C.M."/>
        </authorList>
    </citation>
    <scope>NUCLEOTIDE SEQUENCE [LARGE SCALE GENOMIC DNA]</scope>
    <source>
        <strain>MoPn / Nigg</strain>
    </source>
</reference>
<feature type="chain" id="PRO_0000138941" description="Probable fructose-bisphosphate aldolase class 1">
    <location>
        <begin position="1"/>
        <end position="349"/>
    </location>
</feature>
<feature type="active site" description="Schiff-base intermediate with dihydroxyacetone-P" evidence="1">
    <location>
        <position position="236"/>
    </location>
</feature>
<comment type="catalytic activity">
    <reaction>
        <text>beta-D-fructose 1,6-bisphosphate = D-glyceraldehyde 3-phosphate + dihydroxyacetone phosphate</text>
        <dbReference type="Rhea" id="RHEA:14729"/>
        <dbReference type="ChEBI" id="CHEBI:32966"/>
        <dbReference type="ChEBI" id="CHEBI:57642"/>
        <dbReference type="ChEBI" id="CHEBI:59776"/>
        <dbReference type="EC" id="4.1.2.13"/>
    </reaction>
</comment>
<comment type="subcellular location">
    <subcellularLocation>
        <location evidence="2">Cytoplasm</location>
    </subcellularLocation>
</comment>
<comment type="similarity">
    <text evidence="2">Belongs to the DeoC/FbaB aldolase family. FbaB subfamily.</text>
</comment>
<dbReference type="EC" id="4.1.2.13"/>
<dbReference type="EMBL" id="AE002160">
    <property type="protein sequence ID" value="AAF39333.1"/>
    <property type="molecule type" value="Genomic_DNA"/>
</dbReference>
<dbReference type="PIR" id="G81697">
    <property type="entry name" value="G81697"/>
</dbReference>
<dbReference type="RefSeq" id="WP_010230582.1">
    <property type="nucleotide sequence ID" value="NZ_CP063055.1"/>
</dbReference>
<dbReference type="SMR" id="Q9PKH8"/>
<dbReference type="GeneID" id="1245845"/>
<dbReference type="KEGG" id="cmu:TC_0487"/>
<dbReference type="eggNOG" id="COG1830">
    <property type="taxonomic scope" value="Bacteria"/>
</dbReference>
<dbReference type="HOGENOM" id="CLU_057069_0_0_0"/>
<dbReference type="OrthoDB" id="9769559at2"/>
<dbReference type="Proteomes" id="UP000000800">
    <property type="component" value="Chromosome"/>
</dbReference>
<dbReference type="GO" id="GO:0005737">
    <property type="term" value="C:cytoplasm"/>
    <property type="evidence" value="ECO:0007669"/>
    <property type="project" value="UniProtKB-SubCell"/>
</dbReference>
<dbReference type="GO" id="GO:0004332">
    <property type="term" value="F:fructose-bisphosphate aldolase activity"/>
    <property type="evidence" value="ECO:0007669"/>
    <property type="project" value="UniProtKB-EC"/>
</dbReference>
<dbReference type="GO" id="GO:0006096">
    <property type="term" value="P:glycolytic process"/>
    <property type="evidence" value="ECO:0007669"/>
    <property type="project" value="UniProtKB-KW"/>
</dbReference>
<dbReference type="CDD" id="cd00958">
    <property type="entry name" value="DhnA"/>
    <property type="match status" value="1"/>
</dbReference>
<dbReference type="Gene3D" id="3.20.20.70">
    <property type="entry name" value="Aldolase class I"/>
    <property type="match status" value="1"/>
</dbReference>
<dbReference type="InterPro" id="IPR013785">
    <property type="entry name" value="Aldolase_TIM"/>
</dbReference>
<dbReference type="InterPro" id="IPR002915">
    <property type="entry name" value="DeoC/FbaB/LacD_aldolase"/>
</dbReference>
<dbReference type="InterPro" id="IPR050456">
    <property type="entry name" value="DeoC/FbaB_aldolase"/>
</dbReference>
<dbReference type="InterPro" id="IPR041720">
    <property type="entry name" value="FbaB-like"/>
</dbReference>
<dbReference type="NCBIfam" id="NF006705">
    <property type="entry name" value="PRK09250.1-2"/>
    <property type="match status" value="1"/>
</dbReference>
<dbReference type="NCBIfam" id="NF006707">
    <property type="entry name" value="PRK09250.1-4"/>
    <property type="match status" value="1"/>
</dbReference>
<dbReference type="PANTHER" id="PTHR47916">
    <property type="entry name" value="FRUCTOSE-BISPHOSPHATE ALDOLASE CLASS 1"/>
    <property type="match status" value="1"/>
</dbReference>
<dbReference type="PANTHER" id="PTHR47916:SF4">
    <property type="entry name" value="FRUCTOSE-BISPHOSPHATE ALDOLASE CLASS 1"/>
    <property type="match status" value="1"/>
</dbReference>
<dbReference type="Pfam" id="PF01791">
    <property type="entry name" value="DeoC"/>
    <property type="match status" value="1"/>
</dbReference>
<dbReference type="SMART" id="SM01133">
    <property type="entry name" value="DeoC"/>
    <property type="match status" value="1"/>
</dbReference>
<dbReference type="SUPFAM" id="SSF51569">
    <property type="entry name" value="Aldolase"/>
    <property type="match status" value="1"/>
</dbReference>
<organism>
    <name type="scientific">Chlamydia muridarum (strain MoPn / Nigg)</name>
    <dbReference type="NCBI Taxonomy" id="243161"/>
    <lineage>
        <taxon>Bacteria</taxon>
        <taxon>Pseudomonadati</taxon>
        <taxon>Chlamydiota</taxon>
        <taxon>Chlamydiia</taxon>
        <taxon>Chlamydiales</taxon>
        <taxon>Chlamydiaceae</taxon>
        <taxon>Chlamydia/Chlamydophila group</taxon>
        <taxon>Chlamydia</taxon>
    </lineage>
</organism>